<gene>
    <name evidence="1" type="primary">leuB1</name>
    <name type="ordered locus">BB1014</name>
</gene>
<comment type="function">
    <text evidence="1">Catalyzes the oxidation of 3-carboxy-2-hydroxy-4-methylpentanoate (3-isopropylmalate) to 3-carboxy-4-methyl-2-oxopentanoate. The product decarboxylates to 4-methyl-2 oxopentanoate.</text>
</comment>
<comment type="catalytic activity">
    <reaction evidence="1">
        <text>(2R,3S)-3-isopropylmalate + NAD(+) = 4-methyl-2-oxopentanoate + CO2 + NADH</text>
        <dbReference type="Rhea" id="RHEA:32271"/>
        <dbReference type="ChEBI" id="CHEBI:16526"/>
        <dbReference type="ChEBI" id="CHEBI:17865"/>
        <dbReference type="ChEBI" id="CHEBI:35121"/>
        <dbReference type="ChEBI" id="CHEBI:57540"/>
        <dbReference type="ChEBI" id="CHEBI:57945"/>
        <dbReference type="EC" id="1.1.1.85"/>
    </reaction>
</comment>
<comment type="cofactor">
    <cofactor evidence="1">
        <name>Mg(2+)</name>
        <dbReference type="ChEBI" id="CHEBI:18420"/>
    </cofactor>
    <cofactor evidence="1">
        <name>Mn(2+)</name>
        <dbReference type="ChEBI" id="CHEBI:29035"/>
    </cofactor>
    <text evidence="1">Binds 1 Mg(2+) or Mn(2+) ion per subunit.</text>
</comment>
<comment type="pathway">
    <text evidence="1">Amino-acid biosynthesis; L-leucine biosynthesis; L-leucine from 3-methyl-2-oxobutanoate: step 3/4.</text>
</comment>
<comment type="subunit">
    <text evidence="1">Homodimer.</text>
</comment>
<comment type="subcellular location">
    <subcellularLocation>
        <location evidence="1">Cytoplasm</location>
    </subcellularLocation>
</comment>
<comment type="similarity">
    <text evidence="1">Belongs to the isocitrate and isopropylmalate dehydrogenases family. LeuB type 1 subfamily.</text>
</comment>
<evidence type="ECO:0000255" key="1">
    <source>
        <dbReference type="HAMAP-Rule" id="MF_01033"/>
    </source>
</evidence>
<organism>
    <name type="scientific">Bordetella bronchiseptica (strain ATCC BAA-588 / NCTC 13252 / RB50)</name>
    <name type="common">Alcaligenes bronchisepticus</name>
    <dbReference type="NCBI Taxonomy" id="257310"/>
    <lineage>
        <taxon>Bacteria</taxon>
        <taxon>Pseudomonadati</taxon>
        <taxon>Pseudomonadota</taxon>
        <taxon>Betaproteobacteria</taxon>
        <taxon>Burkholderiales</taxon>
        <taxon>Alcaligenaceae</taxon>
        <taxon>Bordetella</taxon>
    </lineage>
</organism>
<reference key="1">
    <citation type="journal article" date="2003" name="Nat. Genet.">
        <title>Comparative analysis of the genome sequences of Bordetella pertussis, Bordetella parapertussis and Bordetella bronchiseptica.</title>
        <authorList>
            <person name="Parkhill J."/>
            <person name="Sebaihia M."/>
            <person name="Preston A."/>
            <person name="Murphy L.D."/>
            <person name="Thomson N.R."/>
            <person name="Harris D.E."/>
            <person name="Holden M.T.G."/>
            <person name="Churcher C.M."/>
            <person name="Bentley S.D."/>
            <person name="Mungall K.L."/>
            <person name="Cerdeno-Tarraga A.-M."/>
            <person name="Temple L."/>
            <person name="James K.D."/>
            <person name="Harris B."/>
            <person name="Quail M.A."/>
            <person name="Achtman M."/>
            <person name="Atkin R."/>
            <person name="Baker S."/>
            <person name="Basham D."/>
            <person name="Bason N."/>
            <person name="Cherevach I."/>
            <person name="Chillingworth T."/>
            <person name="Collins M."/>
            <person name="Cronin A."/>
            <person name="Davis P."/>
            <person name="Doggett J."/>
            <person name="Feltwell T."/>
            <person name="Goble A."/>
            <person name="Hamlin N."/>
            <person name="Hauser H."/>
            <person name="Holroyd S."/>
            <person name="Jagels K."/>
            <person name="Leather S."/>
            <person name="Moule S."/>
            <person name="Norberczak H."/>
            <person name="O'Neil S."/>
            <person name="Ormond D."/>
            <person name="Price C."/>
            <person name="Rabbinowitsch E."/>
            <person name="Rutter S."/>
            <person name="Sanders M."/>
            <person name="Saunders D."/>
            <person name="Seeger K."/>
            <person name="Sharp S."/>
            <person name="Simmonds M."/>
            <person name="Skelton J."/>
            <person name="Squares R."/>
            <person name="Squares S."/>
            <person name="Stevens K."/>
            <person name="Unwin L."/>
            <person name="Whitehead S."/>
            <person name="Barrell B.G."/>
            <person name="Maskell D.J."/>
        </authorList>
    </citation>
    <scope>NUCLEOTIDE SEQUENCE [LARGE SCALE GENOMIC DNA]</scope>
    <source>
        <strain>ATCC BAA-588 / NCTC 13252 / RB50</strain>
    </source>
</reference>
<feature type="chain" id="PRO_0000250103" description="3-isopropylmalate dehydrogenase 1">
    <location>
        <begin position="1"/>
        <end position="370"/>
    </location>
</feature>
<feature type="binding site" evidence="1">
    <location>
        <position position="98"/>
    </location>
    <ligand>
        <name>substrate</name>
    </ligand>
</feature>
<feature type="binding site" evidence="1">
    <location>
        <position position="108"/>
    </location>
    <ligand>
        <name>substrate</name>
    </ligand>
</feature>
<feature type="binding site" evidence="1">
    <location>
        <position position="136"/>
    </location>
    <ligand>
        <name>substrate</name>
    </ligand>
</feature>
<feature type="binding site" evidence="1">
    <location>
        <position position="227"/>
    </location>
    <ligand>
        <name>Mg(2+)</name>
        <dbReference type="ChEBI" id="CHEBI:18420"/>
    </ligand>
</feature>
<feature type="binding site" evidence="1">
    <location>
        <position position="227"/>
    </location>
    <ligand>
        <name>substrate</name>
    </ligand>
</feature>
<feature type="binding site" evidence="1">
    <location>
        <position position="251"/>
    </location>
    <ligand>
        <name>Mg(2+)</name>
        <dbReference type="ChEBI" id="CHEBI:18420"/>
    </ligand>
</feature>
<feature type="binding site" evidence="1">
    <location>
        <position position="255"/>
    </location>
    <ligand>
        <name>Mg(2+)</name>
        <dbReference type="ChEBI" id="CHEBI:18420"/>
    </ligand>
</feature>
<feature type="binding site" evidence="1">
    <location>
        <begin position="289"/>
        <end position="301"/>
    </location>
    <ligand>
        <name>NAD(+)</name>
        <dbReference type="ChEBI" id="CHEBI:57540"/>
    </ligand>
</feature>
<feature type="site" description="Important for catalysis" evidence="1">
    <location>
        <position position="143"/>
    </location>
</feature>
<feature type="site" description="Important for catalysis" evidence="1">
    <location>
        <position position="194"/>
    </location>
</feature>
<protein>
    <recommendedName>
        <fullName evidence="1">3-isopropylmalate dehydrogenase 1</fullName>
        <ecNumber evidence="1">1.1.1.85</ecNumber>
    </recommendedName>
    <alternativeName>
        <fullName evidence="1">3-IPM-DH 1</fullName>
    </alternativeName>
    <alternativeName>
        <fullName evidence="1">Beta-IPM dehydrogenase 1</fullName>
        <shortName evidence="1">IMDH 1</shortName>
    </alternativeName>
</protein>
<proteinExistence type="inferred from homology"/>
<dbReference type="EC" id="1.1.1.85" evidence="1"/>
<dbReference type="EMBL" id="BX640440">
    <property type="protein sequence ID" value="CAE31513.1"/>
    <property type="molecule type" value="Genomic_DNA"/>
</dbReference>
<dbReference type="SMR" id="Q7WNM3"/>
<dbReference type="KEGG" id="bbr:BB1014"/>
<dbReference type="eggNOG" id="COG0473">
    <property type="taxonomic scope" value="Bacteria"/>
</dbReference>
<dbReference type="HOGENOM" id="CLU_031953_0_3_4"/>
<dbReference type="UniPathway" id="UPA00048">
    <property type="reaction ID" value="UER00072"/>
</dbReference>
<dbReference type="Proteomes" id="UP000001027">
    <property type="component" value="Chromosome"/>
</dbReference>
<dbReference type="GO" id="GO:0005829">
    <property type="term" value="C:cytosol"/>
    <property type="evidence" value="ECO:0007669"/>
    <property type="project" value="TreeGrafter"/>
</dbReference>
<dbReference type="GO" id="GO:0003862">
    <property type="term" value="F:3-isopropylmalate dehydrogenase activity"/>
    <property type="evidence" value="ECO:0007669"/>
    <property type="project" value="UniProtKB-UniRule"/>
</dbReference>
<dbReference type="GO" id="GO:0000287">
    <property type="term" value="F:magnesium ion binding"/>
    <property type="evidence" value="ECO:0007669"/>
    <property type="project" value="InterPro"/>
</dbReference>
<dbReference type="GO" id="GO:0051287">
    <property type="term" value="F:NAD binding"/>
    <property type="evidence" value="ECO:0007669"/>
    <property type="project" value="InterPro"/>
</dbReference>
<dbReference type="GO" id="GO:0009098">
    <property type="term" value="P:L-leucine biosynthetic process"/>
    <property type="evidence" value="ECO:0007669"/>
    <property type="project" value="UniProtKB-UniRule"/>
</dbReference>
<dbReference type="FunFam" id="3.40.718.10:FF:000006">
    <property type="entry name" value="3-isopropylmalate dehydrogenase"/>
    <property type="match status" value="1"/>
</dbReference>
<dbReference type="Gene3D" id="3.40.718.10">
    <property type="entry name" value="Isopropylmalate Dehydrogenase"/>
    <property type="match status" value="1"/>
</dbReference>
<dbReference type="HAMAP" id="MF_01033">
    <property type="entry name" value="LeuB_type1"/>
    <property type="match status" value="1"/>
</dbReference>
<dbReference type="InterPro" id="IPR019818">
    <property type="entry name" value="IsoCit/isopropylmalate_DH_CS"/>
</dbReference>
<dbReference type="InterPro" id="IPR024084">
    <property type="entry name" value="IsoPropMal-DH-like_dom"/>
</dbReference>
<dbReference type="InterPro" id="IPR004429">
    <property type="entry name" value="Isopropylmalate_DH"/>
</dbReference>
<dbReference type="NCBIfam" id="TIGR00169">
    <property type="entry name" value="leuB"/>
    <property type="match status" value="1"/>
</dbReference>
<dbReference type="PANTHER" id="PTHR42979">
    <property type="entry name" value="3-ISOPROPYLMALATE DEHYDROGENASE"/>
    <property type="match status" value="1"/>
</dbReference>
<dbReference type="PANTHER" id="PTHR42979:SF1">
    <property type="entry name" value="3-ISOPROPYLMALATE DEHYDROGENASE"/>
    <property type="match status" value="1"/>
</dbReference>
<dbReference type="Pfam" id="PF00180">
    <property type="entry name" value="Iso_dh"/>
    <property type="match status" value="1"/>
</dbReference>
<dbReference type="SMART" id="SM01329">
    <property type="entry name" value="Iso_dh"/>
    <property type="match status" value="1"/>
</dbReference>
<dbReference type="SUPFAM" id="SSF53659">
    <property type="entry name" value="Isocitrate/Isopropylmalate dehydrogenase-like"/>
    <property type="match status" value="1"/>
</dbReference>
<dbReference type="PROSITE" id="PS00470">
    <property type="entry name" value="IDH_IMDH"/>
    <property type="match status" value="1"/>
</dbReference>
<name>LEU31_BORBR</name>
<accession>Q7WNM3</accession>
<keyword id="KW-0028">Amino-acid biosynthesis</keyword>
<keyword id="KW-0100">Branched-chain amino acid biosynthesis</keyword>
<keyword id="KW-0963">Cytoplasm</keyword>
<keyword id="KW-0432">Leucine biosynthesis</keyword>
<keyword id="KW-0460">Magnesium</keyword>
<keyword id="KW-0464">Manganese</keyword>
<keyword id="KW-0479">Metal-binding</keyword>
<keyword id="KW-0520">NAD</keyword>
<keyword id="KW-0560">Oxidoreductase</keyword>
<sequence>MSEQNRLLLIGGDGVGAEVVHEAGRIAQWFAARRGLPLSIGQAAFGVEVLNRTGRIMTDDTLAQIRAADAVLFGAIGGPEYDRLPLEQVREEGLLRIRRELGLYANLRPVRYWPALAELCPFVPERVEKVDMMIVRELAGGIYYASPRGIDQTGDGRRVGTNTQRYDDLEIRRIARVAFELARARGGRVCSVDKSNVLESGLLWREEVQACRDAEYPDVELEHILVDNCALQLCLRPARFDVLLADNLFGDILSDAAGAVAGSLGMLPSASFGAEDGGRRRGFYEPVHGSAPDIAGQGIANPLGAILSLALALRWTFRQPAEADLLERAVERALAGGARTLDLLAGAAAPALSTRAMADAVLQALETLAA</sequence>